<sequence length="251" mass="27935">MSETPQKTTHFGYKTVAENDKASMVADVFHSVAAKYDVMNDLMSFGVHRLWKRQTIASSGVRKGHHVLDLAGGTGDLTAKFSQLVGETGQVILGDINSSMLKVGREKLHNLGLVGNIDYVQMNAEALPFPDNSFDLITIAFGLRNVTDKDKALRSMYRILKPGGRLLVLEFSKPEHEILSKAYDFYSFNLLPTMGKLVANDSESYKYLAESIRMHPDQDTLKSMMSDAGFEQTTYQNLTGGIVALHRGFKY</sequence>
<proteinExistence type="inferred from homology"/>
<organism>
    <name type="scientific">Pseudoalteromonas translucida (strain TAC 125)</name>
    <dbReference type="NCBI Taxonomy" id="326442"/>
    <lineage>
        <taxon>Bacteria</taxon>
        <taxon>Pseudomonadati</taxon>
        <taxon>Pseudomonadota</taxon>
        <taxon>Gammaproteobacteria</taxon>
        <taxon>Alteromonadales</taxon>
        <taxon>Pseudoalteromonadaceae</taxon>
        <taxon>Pseudoalteromonas</taxon>
    </lineage>
</organism>
<protein>
    <recommendedName>
        <fullName evidence="1">Ubiquinone/menaquinone biosynthesis C-methyltransferase UbiE</fullName>
        <ecNumber evidence="1">2.1.1.163</ecNumber>
        <ecNumber evidence="1">2.1.1.201</ecNumber>
    </recommendedName>
    <alternativeName>
        <fullName evidence="1">2-methoxy-6-polyprenyl-1,4-benzoquinol methylase</fullName>
    </alternativeName>
    <alternativeName>
        <fullName evidence="1">Demethylmenaquinone methyltransferase</fullName>
    </alternativeName>
</protein>
<name>UBIE_PSET1</name>
<comment type="function">
    <text evidence="1">Methyltransferase required for the conversion of demethylmenaquinol (DMKH2) to menaquinol (MKH2) and the conversion of 2-polyprenyl-6-methoxy-1,4-benzoquinol (DDMQH2) to 2-polyprenyl-3-methyl-6-methoxy-1,4-benzoquinol (DMQH2).</text>
</comment>
<comment type="catalytic activity">
    <reaction evidence="1">
        <text>a 2-demethylmenaquinol + S-adenosyl-L-methionine = a menaquinol + S-adenosyl-L-homocysteine + H(+)</text>
        <dbReference type="Rhea" id="RHEA:42640"/>
        <dbReference type="Rhea" id="RHEA-COMP:9539"/>
        <dbReference type="Rhea" id="RHEA-COMP:9563"/>
        <dbReference type="ChEBI" id="CHEBI:15378"/>
        <dbReference type="ChEBI" id="CHEBI:18151"/>
        <dbReference type="ChEBI" id="CHEBI:55437"/>
        <dbReference type="ChEBI" id="CHEBI:57856"/>
        <dbReference type="ChEBI" id="CHEBI:59789"/>
        <dbReference type="EC" id="2.1.1.163"/>
    </reaction>
</comment>
<comment type="catalytic activity">
    <reaction evidence="1">
        <text>a 2-methoxy-6-(all-trans-polyprenyl)benzene-1,4-diol + S-adenosyl-L-methionine = a 5-methoxy-2-methyl-3-(all-trans-polyprenyl)benzene-1,4-diol + S-adenosyl-L-homocysteine + H(+)</text>
        <dbReference type="Rhea" id="RHEA:28286"/>
        <dbReference type="Rhea" id="RHEA-COMP:10858"/>
        <dbReference type="Rhea" id="RHEA-COMP:10859"/>
        <dbReference type="ChEBI" id="CHEBI:15378"/>
        <dbReference type="ChEBI" id="CHEBI:57856"/>
        <dbReference type="ChEBI" id="CHEBI:59789"/>
        <dbReference type="ChEBI" id="CHEBI:84166"/>
        <dbReference type="ChEBI" id="CHEBI:84167"/>
        <dbReference type="EC" id="2.1.1.201"/>
    </reaction>
</comment>
<comment type="pathway">
    <text evidence="1">Quinol/quinone metabolism; menaquinone biosynthesis; menaquinol from 1,4-dihydroxy-2-naphthoate: step 2/2.</text>
</comment>
<comment type="pathway">
    <text evidence="1">Cofactor biosynthesis; ubiquinone biosynthesis.</text>
</comment>
<comment type="similarity">
    <text evidence="1">Belongs to the class I-like SAM-binding methyltransferase superfamily. MenG/UbiE family.</text>
</comment>
<evidence type="ECO:0000255" key="1">
    <source>
        <dbReference type="HAMAP-Rule" id="MF_01813"/>
    </source>
</evidence>
<dbReference type="EC" id="2.1.1.163" evidence="1"/>
<dbReference type="EC" id="2.1.1.201" evidence="1"/>
<dbReference type="EMBL" id="CR954246">
    <property type="protein sequence ID" value="CAI87961.1"/>
    <property type="molecule type" value="Genomic_DNA"/>
</dbReference>
<dbReference type="SMR" id="Q3IJV7"/>
<dbReference type="STRING" id="326442.PSHAa2926"/>
<dbReference type="KEGG" id="pha:PSHAa2926"/>
<dbReference type="eggNOG" id="COG2226">
    <property type="taxonomic scope" value="Bacteria"/>
</dbReference>
<dbReference type="HOGENOM" id="CLU_037990_0_0_6"/>
<dbReference type="BioCyc" id="PHAL326442:PSHA_RS14375-MONOMER"/>
<dbReference type="UniPathway" id="UPA00079">
    <property type="reaction ID" value="UER00169"/>
</dbReference>
<dbReference type="UniPathway" id="UPA00232"/>
<dbReference type="Proteomes" id="UP000006843">
    <property type="component" value="Chromosome I"/>
</dbReference>
<dbReference type="GO" id="GO:0008425">
    <property type="term" value="F:2-methoxy-6-polyprenyl-1,4-benzoquinol methyltransferase activity"/>
    <property type="evidence" value="ECO:0007669"/>
    <property type="project" value="UniProtKB-UniRule"/>
</dbReference>
<dbReference type="GO" id="GO:0043770">
    <property type="term" value="F:demethylmenaquinone methyltransferase activity"/>
    <property type="evidence" value="ECO:0007669"/>
    <property type="project" value="UniProtKB-UniRule"/>
</dbReference>
<dbReference type="GO" id="GO:0009060">
    <property type="term" value="P:aerobic respiration"/>
    <property type="evidence" value="ECO:0007669"/>
    <property type="project" value="UniProtKB-UniRule"/>
</dbReference>
<dbReference type="GO" id="GO:0009234">
    <property type="term" value="P:menaquinone biosynthetic process"/>
    <property type="evidence" value="ECO:0007669"/>
    <property type="project" value="UniProtKB-UniRule"/>
</dbReference>
<dbReference type="GO" id="GO:0032259">
    <property type="term" value="P:methylation"/>
    <property type="evidence" value="ECO:0007669"/>
    <property type="project" value="UniProtKB-KW"/>
</dbReference>
<dbReference type="CDD" id="cd02440">
    <property type="entry name" value="AdoMet_MTases"/>
    <property type="match status" value="1"/>
</dbReference>
<dbReference type="FunFam" id="3.40.50.150:FF:000014">
    <property type="entry name" value="Ubiquinone/menaquinone biosynthesis C-methyltransferase UbiE"/>
    <property type="match status" value="1"/>
</dbReference>
<dbReference type="Gene3D" id="3.40.50.150">
    <property type="entry name" value="Vaccinia Virus protein VP39"/>
    <property type="match status" value="1"/>
</dbReference>
<dbReference type="HAMAP" id="MF_01813">
    <property type="entry name" value="MenG_UbiE_methyltr"/>
    <property type="match status" value="1"/>
</dbReference>
<dbReference type="InterPro" id="IPR029063">
    <property type="entry name" value="SAM-dependent_MTases_sf"/>
</dbReference>
<dbReference type="InterPro" id="IPR004033">
    <property type="entry name" value="UbiE/COQ5_MeTrFase"/>
</dbReference>
<dbReference type="InterPro" id="IPR023576">
    <property type="entry name" value="UbiE/COQ5_MeTrFase_CS"/>
</dbReference>
<dbReference type="NCBIfam" id="TIGR01934">
    <property type="entry name" value="MenG_MenH_UbiE"/>
    <property type="match status" value="1"/>
</dbReference>
<dbReference type="NCBIfam" id="NF001240">
    <property type="entry name" value="PRK00216.1-1"/>
    <property type="match status" value="1"/>
</dbReference>
<dbReference type="NCBIfam" id="NF001242">
    <property type="entry name" value="PRK00216.1-3"/>
    <property type="match status" value="1"/>
</dbReference>
<dbReference type="NCBIfam" id="NF001244">
    <property type="entry name" value="PRK00216.1-5"/>
    <property type="match status" value="1"/>
</dbReference>
<dbReference type="PANTHER" id="PTHR43591:SF24">
    <property type="entry name" value="2-METHOXY-6-POLYPRENYL-1,4-BENZOQUINOL METHYLASE, MITOCHONDRIAL"/>
    <property type="match status" value="1"/>
</dbReference>
<dbReference type="PANTHER" id="PTHR43591">
    <property type="entry name" value="METHYLTRANSFERASE"/>
    <property type="match status" value="1"/>
</dbReference>
<dbReference type="Pfam" id="PF01209">
    <property type="entry name" value="Ubie_methyltran"/>
    <property type="match status" value="1"/>
</dbReference>
<dbReference type="SUPFAM" id="SSF53335">
    <property type="entry name" value="S-adenosyl-L-methionine-dependent methyltransferases"/>
    <property type="match status" value="1"/>
</dbReference>
<dbReference type="PROSITE" id="PS51608">
    <property type="entry name" value="SAM_MT_UBIE"/>
    <property type="match status" value="1"/>
</dbReference>
<dbReference type="PROSITE" id="PS01183">
    <property type="entry name" value="UBIE_1"/>
    <property type="match status" value="1"/>
</dbReference>
<accession>Q3IJV7</accession>
<feature type="chain" id="PRO_1000056274" description="Ubiquinone/menaquinone biosynthesis C-methyltransferase UbiE">
    <location>
        <begin position="1"/>
        <end position="251"/>
    </location>
</feature>
<feature type="binding site" evidence="1">
    <location>
        <position position="74"/>
    </location>
    <ligand>
        <name>S-adenosyl-L-methionine</name>
        <dbReference type="ChEBI" id="CHEBI:59789"/>
    </ligand>
</feature>
<feature type="binding site" evidence="1">
    <location>
        <position position="95"/>
    </location>
    <ligand>
        <name>S-adenosyl-L-methionine</name>
        <dbReference type="ChEBI" id="CHEBI:59789"/>
    </ligand>
</feature>
<feature type="binding site" evidence="1">
    <location>
        <begin position="123"/>
        <end position="124"/>
    </location>
    <ligand>
        <name>S-adenosyl-L-methionine</name>
        <dbReference type="ChEBI" id="CHEBI:59789"/>
    </ligand>
</feature>
<keyword id="KW-0474">Menaquinone biosynthesis</keyword>
<keyword id="KW-0489">Methyltransferase</keyword>
<keyword id="KW-1185">Reference proteome</keyword>
<keyword id="KW-0949">S-adenosyl-L-methionine</keyword>
<keyword id="KW-0808">Transferase</keyword>
<keyword id="KW-0831">Ubiquinone biosynthesis</keyword>
<reference key="1">
    <citation type="journal article" date="2005" name="Genome Res.">
        <title>Coping with cold: the genome of the versatile marine Antarctica bacterium Pseudoalteromonas haloplanktis TAC125.</title>
        <authorList>
            <person name="Medigue C."/>
            <person name="Krin E."/>
            <person name="Pascal G."/>
            <person name="Barbe V."/>
            <person name="Bernsel A."/>
            <person name="Bertin P.N."/>
            <person name="Cheung F."/>
            <person name="Cruveiller S."/>
            <person name="D'Amico S."/>
            <person name="Duilio A."/>
            <person name="Fang G."/>
            <person name="Feller G."/>
            <person name="Ho C."/>
            <person name="Mangenot S."/>
            <person name="Marino G."/>
            <person name="Nilsson J."/>
            <person name="Parrilli E."/>
            <person name="Rocha E.P.C."/>
            <person name="Rouy Z."/>
            <person name="Sekowska A."/>
            <person name="Tutino M.L."/>
            <person name="Vallenet D."/>
            <person name="von Heijne G."/>
            <person name="Danchin A."/>
        </authorList>
    </citation>
    <scope>NUCLEOTIDE SEQUENCE [LARGE SCALE GENOMIC DNA]</scope>
    <source>
        <strain>TAC 125</strain>
    </source>
</reference>
<gene>
    <name evidence="1" type="primary">ubiE</name>
    <name type="ordered locus">PSHAa2926</name>
</gene>